<feature type="chain" id="PRO_0000155668" description="Putative manganese efflux pump MntP 1">
    <location>
        <begin position="1"/>
        <end position="182"/>
    </location>
</feature>
<feature type="transmembrane region" description="Helical" evidence="1">
    <location>
        <begin position="4"/>
        <end position="24"/>
    </location>
</feature>
<feature type="transmembrane region" description="Helical" evidence="1">
    <location>
        <begin position="42"/>
        <end position="62"/>
    </location>
</feature>
<feature type="transmembrane region" description="Helical" evidence="1">
    <location>
        <begin position="63"/>
        <end position="83"/>
    </location>
</feature>
<feature type="transmembrane region" description="Helical" evidence="1">
    <location>
        <begin position="103"/>
        <end position="123"/>
    </location>
</feature>
<feature type="transmembrane region" description="Helical" evidence="1">
    <location>
        <begin position="127"/>
        <end position="147"/>
    </location>
</feature>
<feature type="transmembrane region" description="Helical" evidence="1">
    <location>
        <begin position="162"/>
        <end position="182"/>
    </location>
</feature>
<sequence length="182" mass="19747">MIELLLLSLALSMDAFAVSLGLGARFGYNKRESLRPALSFGIFQGIMPLLGFFVGVTFIAFISAFDHYLAFGILALIGAKMIYEGLSQSEEERLDELSHRTLLILSIATSIDALAAGVSLHLIDVNVFLSCTIIAFTTFLLSYLGVLWGKRAGEQCKRGAEILGGVILIGIGSKILLEHLFF</sequence>
<comment type="function">
    <text evidence="1">Probably functions as a manganese efflux pump.</text>
</comment>
<comment type="subcellular location">
    <subcellularLocation>
        <location evidence="1">Cell inner membrane</location>
        <topology evidence="1">Multi-pass membrane protein</topology>
    </subcellularLocation>
</comment>
<comment type="similarity">
    <text evidence="1">Belongs to the MntP (TC 9.B.29) family.</text>
</comment>
<dbReference type="EMBL" id="BX571659">
    <property type="protein sequence ID" value="CAE10076.1"/>
    <property type="molecule type" value="Genomic_DNA"/>
</dbReference>
<dbReference type="RefSeq" id="WP_011138870.1">
    <property type="nucleotide sequence ID" value="NC_005090.1"/>
</dbReference>
<dbReference type="STRING" id="273121.WS0973"/>
<dbReference type="KEGG" id="wsu:WS0973"/>
<dbReference type="eggNOG" id="COG1971">
    <property type="taxonomic scope" value="Bacteria"/>
</dbReference>
<dbReference type="HOGENOM" id="CLU_096410_3_0_7"/>
<dbReference type="Proteomes" id="UP000000422">
    <property type="component" value="Chromosome"/>
</dbReference>
<dbReference type="GO" id="GO:0005886">
    <property type="term" value="C:plasma membrane"/>
    <property type="evidence" value="ECO:0007669"/>
    <property type="project" value="UniProtKB-SubCell"/>
</dbReference>
<dbReference type="GO" id="GO:0005384">
    <property type="term" value="F:manganese ion transmembrane transporter activity"/>
    <property type="evidence" value="ECO:0007669"/>
    <property type="project" value="UniProtKB-UniRule"/>
</dbReference>
<dbReference type="HAMAP" id="MF_01521">
    <property type="entry name" value="MntP_pump"/>
    <property type="match status" value="1"/>
</dbReference>
<dbReference type="InterPro" id="IPR003810">
    <property type="entry name" value="Mntp/YtaF"/>
</dbReference>
<dbReference type="InterPro" id="IPR022929">
    <property type="entry name" value="Put_MntP"/>
</dbReference>
<dbReference type="PANTHER" id="PTHR35529">
    <property type="entry name" value="MANGANESE EFFLUX PUMP MNTP-RELATED"/>
    <property type="match status" value="1"/>
</dbReference>
<dbReference type="PANTHER" id="PTHR35529:SF1">
    <property type="entry name" value="MANGANESE EFFLUX PUMP MNTP-RELATED"/>
    <property type="match status" value="1"/>
</dbReference>
<dbReference type="Pfam" id="PF02659">
    <property type="entry name" value="Mntp"/>
    <property type="match status" value="1"/>
</dbReference>
<organism>
    <name type="scientific">Wolinella succinogenes (strain ATCC 29543 / DSM 1740 / CCUG 13145 / JCM 31913 / LMG 7466 / NCTC 11488 / FDC 602W)</name>
    <name type="common">Vibrio succinogenes</name>
    <dbReference type="NCBI Taxonomy" id="273121"/>
    <lineage>
        <taxon>Bacteria</taxon>
        <taxon>Pseudomonadati</taxon>
        <taxon>Campylobacterota</taxon>
        <taxon>Epsilonproteobacteria</taxon>
        <taxon>Campylobacterales</taxon>
        <taxon>Helicobacteraceae</taxon>
        <taxon>Wolinella</taxon>
    </lineage>
</organism>
<keyword id="KW-0997">Cell inner membrane</keyword>
<keyword id="KW-1003">Cell membrane</keyword>
<keyword id="KW-0406">Ion transport</keyword>
<keyword id="KW-0464">Manganese</keyword>
<keyword id="KW-0472">Membrane</keyword>
<keyword id="KW-1185">Reference proteome</keyword>
<keyword id="KW-0812">Transmembrane</keyword>
<keyword id="KW-1133">Transmembrane helix</keyword>
<keyword id="KW-0813">Transport</keyword>
<gene>
    <name evidence="1" type="primary">mntP1</name>
    <name type="ordered locus">WS0973</name>
</gene>
<protein>
    <recommendedName>
        <fullName evidence="1">Putative manganese efflux pump MntP 1</fullName>
    </recommendedName>
</protein>
<proteinExistence type="inferred from homology"/>
<evidence type="ECO:0000255" key="1">
    <source>
        <dbReference type="HAMAP-Rule" id="MF_01521"/>
    </source>
</evidence>
<name>MNTP1_WOLSU</name>
<reference key="1">
    <citation type="journal article" date="2003" name="Proc. Natl. Acad. Sci. U.S.A.">
        <title>Complete genome sequence and analysis of Wolinella succinogenes.</title>
        <authorList>
            <person name="Baar C."/>
            <person name="Eppinger M."/>
            <person name="Raddatz G."/>
            <person name="Simon J."/>
            <person name="Lanz C."/>
            <person name="Klimmek O."/>
            <person name="Nandakumar R."/>
            <person name="Gross R."/>
            <person name="Rosinus A."/>
            <person name="Keller H."/>
            <person name="Jagtap P."/>
            <person name="Linke B."/>
            <person name="Meyer F."/>
            <person name="Lederer H."/>
            <person name="Schuster S.C."/>
        </authorList>
    </citation>
    <scope>NUCLEOTIDE SEQUENCE [LARGE SCALE GENOMIC DNA]</scope>
    <source>
        <strain>ATCC 29543 / DSM 1740 / CCUG 13145 / JCM 31913 / LMG 7466 / NCTC 11488 / FDC 602W</strain>
    </source>
</reference>
<accession>Q7MRX1</accession>